<gene>
    <name evidence="1" type="primary">rpmB</name>
    <name type="ordered locus">CKR_1276</name>
</gene>
<evidence type="ECO:0000255" key="1">
    <source>
        <dbReference type="HAMAP-Rule" id="MF_00373"/>
    </source>
</evidence>
<evidence type="ECO:0000305" key="2"/>
<feature type="chain" id="PRO_1000195915" description="Large ribosomal subunit protein bL28">
    <location>
        <begin position="1"/>
        <end position="63"/>
    </location>
</feature>
<proteinExistence type="inferred from homology"/>
<reference key="1">
    <citation type="submission" date="2005-09" db="EMBL/GenBank/DDBJ databases">
        <title>Complete genome sequence of Clostridium kluyveri and comparative genomics of Clostridia species.</title>
        <authorList>
            <person name="Inui M."/>
            <person name="Nonaka H."/>
            <person name="Shinoda Y."/>
            <person name="Ikenaga Y."/>
            <person name="Abe M."/>
            <person name="Naito K."/>
            <person name="Vertes A.A."/>
            <person name="Yukawa H."/>
        </authorList>
    </citation>
    <scope>NUCLEOTIDE SEQUENCE [LARGE SCALE GENOMIC DNA]</scope>
    <source>
        <strain>NBRC 12016</strain>
    </source>
</reference>
<accession>B9E1F2</accession>
<comment type="similarity">
    <text evidence="1">Belongs to the bacterial ribosomal protein bL28 family.</text>
</comment>
<dbReference type="EMBL" id="AP009049">
    <property type="protein sequence ID" value="BAH06327.1"/>
    <property type="molecule type" value="Genomic_DNA"/>
</dbReference>
<dbReference type="RefSeq" id="WP_012101769.1">
    <property type="nucleotide sequence ID" value="NC_011837.1"/>
</dbReference>
<dbReference type="SMR" id="B9E1F2"/>
<dbReference type="KEGG" id="ckr:CKR_1276"/>
<dbReference type="HOGENOM" id="CLU_064548_7_0_9"/>
<dbReference type="Proteomes" id="UP000007969">
    <property type="component" value="Chromosome"/>
</dbReference>
<dbReference type="GO" id="GO:1990904">
    <property type="term" value="C:ribonucleoprotein complex"/>
    <property type="evidence" value="ECO:0007669"/>
    <property type="project" value="UniProtKB-KW"/>
</dbReference>
<dbReference type="GO" id="GO:0005840">
    <property type="term" value="C:ribosome"/>
    <property type="evidence" value="ECO:0007669"/>
    <property type="project" value="UniProtKB-KW"/>
</dbReference>
<dbReference type="GO" id="GO:0003735">
    <property type="term" value="F:structural constituent of ribosome"/>
    <property type="evidence" value="ECO:0007669"/>
    <property type="project" value="InterPro"/>
</dbReference>
<dbReference type="GO" id="GO:0006412">
    <property type="term" value="P:translation"/>
    <property type="evidence" value="ECO:0007669"/>
    <property type="project" value="UniProtKB-UniRule"/>
</dbReference>
<dbReference type="Gene3D" id="2.30.170.40">
    <property type="entry name" value="Ribosomal protein L28/L24"/>
    <property type="match status" value="1"/>
</dbReference>
<dbReference type="HAMAP" id="MF_00373">
    <property type="entry name" value="Ribosomal_bL28"/>
    <property type="match status" value="1"/>
</dbReference>
<dbReference type="InterPro" id="IPR050096">
    <property type="entry name" value="Bacterial_rp_bL28"/>
</dbReference>
<dbReference type="InterPro" id="IPR026569">
    <property type="entry name" value="Ribosomal_bL28"/>
</dbReference>
<dbReference type="InterPro" id="IPR034704">
    <property type="entry name" value="Ribosomal_bL28/bL31-like_sf"/>
</dbReference>
<dbReference type="InterPro" id="IPR001383">
    <property type="entry name" value="Ribosomal_bL28_bact-type"/>
</dbReference>
<dbReference type="InterPro" id="IPR037147">
    <property type="entry name" value="Ribosomal_bL28_sf"/>
</dbReference>
<dbReference type="NCBIfam" id="TIGR00009">
    <property type="entry name" value="L28"/>
    <property type="match status" value="1"/>
</dbReference>
<dbReference type="PANTHER" id="PTHR39080">
    <property type="entry name" value="50S RIBOSOMAL PROTEIN L28"/>
    <property type="match status" value="1"/>
</dbReference>
<dbReference type="PANTHER" id="PTHR39080:SF1">
    <property type="entry name" value="LARGE RIBOSOMAL SUBUNIT PROTEIN BL28A"/>
    <property type="match status" value="1"/>
</dbReference>
<dbReference type="Pfam" id="PF00830">
    <property type="entry name" value="Ribosomal_L28"/>
    <property type="match status" value="1"/>
</dbReference>
<dbReference type="SUPFAM" id="SSF143800">
    <property type="entry name" value="L28p-like"/>
    <property type="match status" value="1"/>
</dbReference>
<sequence>MSKKCEICGKGVVFGVQYSHSHRQSKRTWSPNIRKIKAIVKGTPRTIHVCARCLRSGKVQRAI</sequence>
<keyword id="KW-0687">Ribonucleoprotein</keyword>
<keyword id="KW-0689">Ribosomal protein</keyword>
<organism>
    <name type="scientific">Clostridium kluyveri (strain NBRC 12016)</name>
    <dbReference type="NCBI Taxonomy" id="583346"/>
    <lineage>
        <taxon>Bacteria</taxon>
        <taxon>Bacillati</taxon>
        <taxon>Bacillota</taxon>
        <taxon>Clostridia</taxon>
        <taxon>Eubacteriales</taxon>
        <taxon>Clostridiaceae</taxon>
        <taxon>Clostridium</taxon>
    </lineage>
</organism>
<name>RL28_CLOK1</name>
<protein>
    <recommendedName>
        <fullName evidence="1">Large ribosomal subunit protein bL28</fullName>
    </recommendedName>
    <alternativeName>
        <fullName evidence="2">50S ribosomal protein L28</fullName>
    </alternativeName>
</protein>